<name>QNR_VIBPA</name>
<keyword id="KW-0046">Antibiotic resistance</keyword>
<dbReference type="EMBL" id="BA000032">
    <property type="protein sequence ID" value="BAC61438.1"/>
    <property type="molecule type" value="Genomic_DNA"/>
</dbReference>
<dbReference type="RefSeq" id="NP_799605.1">
    <property type="nucleotide sequence ID" value="NC_004605.1"/>
</dbReference>
<dbReference type="RefSeq" id="WP_005482928.1">
    <property type="nucleotide sequence ID" value="NC_004605.1"/>
</dbReference>
<dbReference type="SMR" id="Q87K03"/>
<dbReference type="GeneID" id="1190774"/>
<dbReference type="KEGG" id="vpa:VPA0095"/>
<dbReference type="PATRIC" id="fig|223926.6.peg.3055"/>
<dbReference type="eggNOG" id="COG1357">
    <property type="taxonomic scope" value="Bacteria"/>
</dbReference>
<dbReference type="HOGENOM" id="CLU_033401_8_0_6"/>
<dbReference type="Proteomes" id="UP000002493">
    <property type="component" value="Chromosome 2"/>
</dbReference>
<dbReference type="GO" id="GO:0046677">
    <property type="term" value="P:response to antibiotic"/>
    <property type="evidence" value="ECO:0007669"/>
    <property type="project" value="UniProtKB-KW"/>
</dbReference>
<dbReference type="Gene3D" id="2.160.20.80">
    <property type="entry name" value="E3 ubiquitin-protein ligase SopA"/>
    <property type="match status" value="1"/>
</dbReference>
<dbReference type="InterPro" id="IPR001646">
    <property type="entry name" value="5peptide_repeat"/>
</dbReference>
<dbReference type="InterPro" id="IPR051082">
    <property type="entry name" value="Pentapeptide-BTB/POZ_domain"/>
</dbReference>
<dbReference type="NCBIfam" id="NF033086">
    <property type="entry name" value="penta_rpt_Qnr"/>
    <property type="match status" value="1"/>
</dbReference>
<dbReference type="PANTHER" id="PTHR14136">
    <property type="entry name" value="BTB_POZ DOMAIN-CONTAINING PROTEIN KCTD9"/>
    <property type="match status" value="1"/>
</dbReference>
<dbReference type="PANTHER" id="PTHR14136:SF17">
    <property type="entry name" value="BTB_POZ DOMAIN-CONTAINING PROTEIN KCTD9"/>
    <property type="match status" value="1"/>
</dbReference>
<dbReference type="Pfam" id="PF00805">
    <property type="entry name" value="Pentapeptide"/>
    <property type="match status" value="1"/>
</dbReference>
<dbReference type="Pfam" id="PF13599">
    <property type="entry name" value="Pentapeptide_4"/>
    <property type="match status" value="1"/>
</dbReference>
<dbReference type="SUPFAM" id="SSF141571">
    <property type="entry name" value="Pentapeptide repeat-like"/>
    <property type="match status" value="2"/>
</dbReference>
<reference key="1">
    <citation type="journal article" date="2003" name="Lancet">
        <title>Genome sequence of Vibrio parahaemolyticus: a pathogenic mechanism distinct from that of V. cholerae.</title>
        <authorList>
            <person name="Makino K."/>
            <person name="Oshima K."/>
            <person name="Kurokawa K."/>
            <person name="Yokoyama K."/>
            <person name="Uda T."/>
            <person name="Tagomori K."/>
            <person name="Iijima Y."/>
            <person name="Najima M."/>
            <person name="Nakano M."/>
            <person name="Yamashita A."/>
            <person name="Kubota Y."/>
            <person name="Kimura S."/>
            <person name="Yasunaga T."/>
            <person name="Honda T."/>
            <person name="Shinagawa H."/>
            <person name="Hattori M."/>
            <person name="Iida T."/>
        </authorList>
    </citation>
    <scope>NUCLEOTIDE SEQUENCE [LARGE SCALE GENOMIC DNA]</scope>
    <source>
        <strain>RIMD 2210633</strain>
    </source>
</reference>
<reference key="2">
    <citation type="journal article" date="2005" name="Antimicrob. Agents Chemother.">
        <title>Vibrio parahaemolyticus chromosomal qnr homologue VPA0095: demonstration by transformation with a mutated gene of its potential to reduce quinolone susceptibility in Escherichia coli.</title>
        <authorList>
            <person name="Saga T."/>
            <person name="Kaku M."/>
            <person name="Onodera Y."/>
            <person name="Yamachika S."/>
            <person name="Sato K."/>
            <person name="Takase H."/>
        </authorList>
    </citation>
    <scope>FUNCTION</scope>
    <scope>MUTAGENESIS OF CYS-115</scope>
    <source>
        <strain>8611</strain>
    </source>
</reference>
<organism>
    <name type="scientific">Vibrio parahaemolyticus serotype O3:K6 (strain RIMD 2210633)</name>
    <dbReference type="NCBI Taxonomy" id="223926"/>
    <lineage>
        <taxon>Bacteria</taxon>
        <taxon>Pseudomonadati</taxon>
        <taxon>Pseudomonadota</taxon>
        <taxon>Gammaproteobacteria</taxon>
        <taxon>Vibrionales</taxon>
        <taxon>Vibrionaceae</taxon>
        <taxon>Vibrio</taxon>
    </lineage>
</organism>
<evidence type="ECO:0000269" key="1">
    <source>
    </source>
</evidence>
<evidence type="ECO:0000305" key="2"/>
<evidence type="ECO:0000312" key="3">
    <source>
        <dbReference type="EMBL" id="BAC61438.1"/>
    </source>
</evidence>
<accession>Q87K03</accession>
<comment type="function">
    <text evidence="1">Has no effect when overexpressed in E.coli. When Cys-115 is mutated to Tyr and overexpressed it increases (fluoro)quinolone resistance in E.coli up to 16-fold for ciprofloxacin, levofloxacin and nalidixic acid.</text>
</comment>
<comment type="similarity">
    <text evidence="2">Belongs to the pentapeptide repeat protein family.</text>
</comment>
<gene>
    <name evidence="3" type="ordered locus">VPA0095</name>
</gene>
<proteinExistence type="evidence at protein level"/>
<feature type="chain" id="PRO_0000434157" description="Pentapeptide repeat protein VPA0095">
    <location>
        <begin position="1"/>
        <end position="216"/>
    </location>
</feature>
<feature type="mutagenesis site" description="Increased resistance to (fluoro)quinolone antibiotics when expressed in E.coli." evidence="1">
    <original>C</original>
    <variation>Y</variation>
    <location>
        <position position="115"/>
    </location>
</feature>
<protein>
    <recommendedName>
        <fullName evidence="2">Pentapeptide repeat protein VPA0095</fullName>
    </recommendedName>
</protein>
<sequence length="216" mass="24688">MLKTDLIFERENFSHHDFQNATFKNCHFYMCSFDHADLRDAKFIDCRFIESKALEGCSFRFANLKDASFTNCMLAMSLFNGANCMGLELRKCDLKGANFQGANFANRVSNTMFFCSAFITGCNLTYCNFERVLLEKCDLFENRWNGANLAGATLKGSDLSRCEFSPEQWGTFNVEQCDLTHVELDGLDIRRVSLFGVKICDWQQEQLLAPFGLIIL</sequence>